<organism>
    <name type="scientific">Allorhizobium ampelinum (strain ATCC BAA-846 / DSM 112012 / S4)</name>
    <name type="common">Agrobacterium vitis (strain S4)</name>
    <dbReference type="NCBI Taxonomy" id="311402"/>
    <lineage>
        <taxon>Bacteria</taxon>
        <taxon>Pseudomonadati</taxon>
        <taxon>Pseudomonadota</taxon>
        <taxon>Alphaproteobacteria</taxon>
        <taxon>Hyphomicrobiales</taxon>
        <taxon>Rhizobiaceae</taxon>
        <taxon>Rhizobium/Agrobacterium group</taxon>
        <taxon>Allorhizobium</taxon>
        <taxon>Allorhizobium ampelinum</taxon>
    </lineage>
</organism>
<reference key="1">
    <citation type="journal article" date="1992" name="Mol. Gen. Genet.">
        <title>Organization and functional analysis of three T-DNAs from the vitopine Ti plasmid pTiS4.</title>
        <authorList>
            <person name="Canaday J."/>
            <person name="Gerard J.-C."/>
            <person name="Crouzet P."/>
            <person name="Otten L."/>
        </authorList>
    </citation>
    <scope>NUCLEOTIDE SEQUENCE [GENOMIC DNA]</scope>
</reference>
<reference key="2">
    <citation type="journal article" date="2009" name="J. Bacteriol.">
        <title>Genome sequences of three Agrobacterium biovars help elucidate the evolution of multichromosome genomes in bacteria.</title>
        <authorList>
            <person name="Slater S.C."/>
            <person name="Goldman B.S."/>
            <person name="Goodner B."/>
            <person name="Setubal J.C."/>
            <person name="Farrand S.K."/>
            <person name="Nester E.W."/>
            <person name="Burr T.J."/>
            <person name="Banta L."/>
            <person name="Dickerman A.W."/>
            <person name="Paulsen I."/>
            <person name="Otten L."/>
            <person name="Suen G."/>
            <person name="Welch R."/>
            <person name="Almeida N.F."/>
            <person name="Arnold F."/>
            <person name="Burton O.T."/>
            <person name="Du Z."/>
            <person name="Ewing A."/>
            <person name="Godsy E."/>
            <person name="Heisel S."/>
            <person name="Houmiel K.L."/>
            <person name="Jhaveri J."/>
            <person name="Lu J."/>
            <person name="Miller N.M."/>
            <person name="Norton S."/>
            <person name="Chen Q."/>
            <person name="Phoolcharoen W."/>
            <person name="Ohlin V."/>
            <person name="Ondrusek D."/>
            <person name="Pride N."/>
            <person name="Stricklin S.L."/>
            <person name="Sun J."/>
            <person name="Wheeler C."/>
            <person name="Wilson L."/>
            <person name="Zhu H."/>
            <person name="Wood D.W."/>
        </authorList>
    </citation>
    <scope>NUCLEOTIDE SEQUENCE [LARGE SCALE GENOMIC DNA]</scope>
    <source>
        <strain>ATCC BAA-846 / DSM 112012 / S4</strain>
    </source>
</reference>
<accession>Q04557</accession>
<accession>B9K453</accession>
<geneLocation type="plasmid">
    <name>pTiS4</name>
</geneLocation>
<feature type="chain" id="PRO_0000105244" description="Indoleacetamide hydrolase">
    <location>
        <begin position="1"/>
        <end position="462"/>
    </location>
</feature>
<feature type="active site" description="Charge relay system" evidence="1">
    <location>
        <position position="74"/>
    </location>
</feature>
<feature type="active site" description="Charge relay system" evidence="1">
    <location>
        <position position="149"/>
    </location>
</feature>
<feature type="active site" description="Acyl-ester intermediate" evidence="1">
    <location>
        <position position="173"/>
    </location>
</feature>
<sequence length="462" mass="49810">MVEISSISQTLRALRRKQYSCRDLVESLVSRSESATHLNAFAATDWLHLRNEADRVDRNGSGGVGLMGIPLCFKANIATGIFPTSAGTQGLLRHKPAIPAKIVERLHSAGALIGASGNMHELSFGITNDNKTFGPARNPWNQALISGGSSGGVAVSVAANLMLGGIGTDTGASVRLPAALCGVVGFRPTFGNYPTDGIVPVSPSRDTPGLIVRSVEDAVLLDRIIRNKCPTQNMSLKGLRLGLPRSHFFDNLEPHVAAASERAIRRLATNQMTFVEADIPNVAELTRKVSLPVAIYEFPRALMAYLSFHGIGNTFDELIQNIQDPQVYDLVQSQLSKGLISESVYRRALRCYKPRLKATYENYYSSNGLDAVLFPSVPLTAKPVGLQTTLVHNGVETDTFGIFVRNLDPSSNIGLPSLSVPVSLTPDRLPVGIQIEGPFGSDDMVLAIGRAVEEMVKFGQEY</sequence>
<name>HYIN1_ALLAM</name>
<comment type="function">
    <text>Hydrolyzes indole-3-acetamide (IAM) into indole-3-acetic acid (IAA).</text>
</comment>
<comment type="pathway">
    <text>Plant hormone metabolism; auxin biosynthesis.</text>
</comment>
<comment type="similarity">
    <text evidence="2">Belongs to the amidase family.</text>
</comment>
<proteinExistence type="inferred from homology"/>
<gene>
    <name type="primary">iaaH</name>
    <name type="synonym">tms2</name>
    <name type="ordered locus">Avi_8287</name>
</gene>
<dbReference type="EC" id="3.5.1.-"/>
<dbReference type="EMBL" id="M91609">
    <property type="protein sequence ID" value="AAA98148.1"/>
    <property type="molecule type" value="Genomic_DNA"/>
</dbReference>
<dbReference type="EMBL" id="CP000637">
    <property type="protein sequence ID" value="ACM39707.1"/>
    <property type="molecule type" value="Genomic_DNA"/>
</dbReference>
<dbReference type="PIR" id="S30104">
    <property type="entry name" value="S30104"/>
</dbReference>
<dbReference type="RefSeq" id="WP_012649066.1">
    <property type="nucleotide sequence ID" value="NC_011982.1"/>
</dbReference>
<dbReference type="SMR" id="Q04557"/>
<dbReference type="KEGG" id="avi:Avi_8287"/>
<dbReference type="HOGENOM" id="CLU_009600_0_3_5"/>
<dbReference type="UniPathway" id="UPA00151"/>
<dbReference type="Proteomes" id="UP000001596">
    <property type="component" value="Plasmid pTiS4"/>
</dbReference>
<dbReference type="GO" id="GO:0016787">
    <property type="term" value="F:hydrolase activity"/>
    <property type="evidence" value="ECO:0007669"/>
    <property type="project" value="UniProtKB-KW"/>
</dbReference>
<dbReference type="GO" id="GO:0009851">
    <property type="term" value="P:auxin biosynthetic process"/>
    <property type="evidence" value="ECO:0007669"/>
    <property type="project" value="UniProtKB-UniPathway"/>
</dbReference>
<dbReference type="Gene3D" id="3.90.1300.10">
    <property type="entry name" value="Amidase signature (AS) domain"/>
    <property type="match status" value="1"/>
</dbReference>
<dbReference type="InterPro" id="IPR000120">
    <property type="entry name" value="Amidase"/>
</dbReference>
<dbReference type="InterPro" id="IPR020556">
    <property type="entry name" value="Amidase_CS"/>
</dbReference>
<dbReference type="InterPro" id="IPR023631">
    <property type="entry name" value="Amidase_dom"/>
</dbReference>
<dbReference type="InterPro" id="IPR036928">
    <property type="entry name" value="AS_sf"/>
</dbReference>
<dbReference type="NCBIfam" id="NF005688">
    <property type="entry name" value="PRK07488.1"/>
    <property type="match status" value="1"/>
</dbReference>
<dbReference type="PANTHER" id="PTHR11895:SF151">
    <property type="entry name" value="GLUTAMYL-TRNA(GLN) AMIDOTRANSFERASE SUBUNIT A"/>
    <property type="match status" value="1"/>
</dbReference>
<dbReference type="PANTHER" id="PTHR11895">
    <property type="entry name" value="TRANSAMIDASE"/>
    <property type="match status" value="1"/>
</dbReference>
<dbReference type="Pfam" id="PF01425">
    <property type="entry name" value="Amidase"/>
    <property type="match status" value="1"/>
</dbReference>
<dbReference type="SUPFAM" id="SSF75304">
    <property type="entry name" value="Amidase signature (AS) enzymes"/>
    <property type="match status" value="1"/>
</dbReference>
<dbReference type="PROSITE" id="PS00571">
    <property type="entry name" value="AMIDASES"/>
    <property type="match status" value="1"/>
</dbReference>
<protein>
    <recommendedName>
        <fullName>Indoleacetamide hydrolase</fullName>
        <shortName>IAH</shortName>
        <ecNumber>3.5.1.-</ecNumber>
    </recommendedName>
    <alternativeName>
        <fullName>Indole-3-acetamide hydrolase</fullName>
    </alternativeName>
</protein>
<evidence type="ECO:0000250" key="1"/>
<evidence type="ECO:0000305" key="2"/>
<keyword id="KW-0073">Auxin biosynthesis</keyword>
<keyword id="KW-0192">Crown gall tumor</keyword>
<keyword id="KW-0378">Hydrolase</keyword>
<keyword id="KW-0614">Plasmid</keyword>
<keyword id="KW-1185">Reference proteome</keyword>